<comment type="function">
    <text evidence="1">Catalyzes the 2-thiolation of uridine at the wobble position (U34) of tRNA, leading to the formation of s(2)U34.</text>
</comment>
<comment type="catalytic activity">
    <reaction evidence="1">
        <text>S-sulfanyl-L-cysteinyl-[protein] + uridine(34) in tRNA + AH2 + ATP = 2-thiouridine(34) in tRNA + L-cysteinyl-[protein] + A + AMP + diphosphate + H(+)</text>
        <dbReference type="Rhea" id="RHEA:47032"/>
        <dbReference type="Rhea" id="RHEA-COMP:10131"/>
        <dbReference type="Rhea" id="RHEA-COMP:11726"/>
        <dbReference type="Rhea" id="RHEA-COMP:11727"/>
        <dbReference type="Rhea" id="RHEA-COMP:11728"/>
        <dbReference type="ChEBI" id="CHEBI:13193"/>
        <dbReference type="ChEBI" id="CHEBI:15378"/>
        <dbReference type="ChEBI" id="CHEBI:17499"/>
        <dbReference type="ChEBI" id="CHEBI:29950"/>
        <dbReference type="ChEBI" id="CHEBI:30616"/>
        <dbReference type="ChEBI" id="CHEBI:33019"/>
        <dbReference type="ChEBI" id="CHEBI:61963"/>
        <dbReference type="ChEBI" id="CHEBI:65315"/>
        <dbReference type="ChEBI" id="CHEBI:87170"/>
        <dbReference type="ChEBI" id="CHEBI:456215"/>
        <dbReference type="EC" id="2.8.1.13"/>
    </reaction>
</comment>
<comment type="subcellular location">
    <subcellularLocation>
        <location evidence="1">Cytoplasm</location>
    </subcellularLocation>
</comment>
<comment type="similarity">
    <text evidence="1">Belongs to the MnmA/TRMU family.</text>
</comment>
<organism>
    <name type="scientific">Bradyrhizobium sp. (strain BTAi1 / ATCC BAA-1182)</name>
    <dbReference type="NCBI Taxonomy" id="288000"/>
    <lineage>
        <taxon>Bacteria</taxon>
        <taxon>Pseudomonadati</taxon>
        <taxon>Pseudomonadota</taxon>
        <taxon>Alphaproteobacteria</taxon>
        <taxon>Hyphomicrobiales</taxon>
        <taxon>Nitrobacteraceae</taxon>
        <taxon>Bradyrhizobium</taxon>
    </lineage>
</organism>
<accession>A5ED38</accession>
<proteinExistence type="inferred from homology"/>
<gene>
    <name evidence="1" type="primary">mnmA</name>
    <name type="ordered locus">BBta_1881</name>
</gene>
<evidence type="ECO:0000255" key="1">
    <source>
        <dbReference type="HAMAP-Rule" id="MF_00144"/>
    </source>
</evidence>
<reference key="1">
    <citation type="journal article" date="2007" name="Science">
        <title>Legumes symbioses: absence of nod genes in photosynthetic bradyrhizobia.</title>
        <authorList>
            <person name="Giraud E."/>
            <person name="Moulin L."/>
            <person name="Vallenet D."/>
            <person name="Barbe V."/>
            <person name="Cytryn E."/>
            <person name="Avarre J.-C."/>
            <person name="Jaubert M."/>
            <person name="Simon D."/>
            <person name="Cartieaux F."/>
            <person name="Prin Y."/>
            <person name="Bena G."/>
            <person name="Hannibal L."/>
            <person name="Fardoux J."/>
            <person name="Kojadinovic M."/>
            <person name="Vuillet L."/>
            <person name="Lajus A."/>
            <person name="Cruveiller S."/>
            <person name="Rouy Z."/>
            <person name="Mangenot S."/>
            <person name="Segurens B."/>
            <person name="Dossat C."/>
            <person name="Franck W.L."/>
            <person name="Chang W.-S."/>
            <person name="Saunders E."/>
            <person name="Bruce D."/>
            <person name="Richardson P."/>
            <person name="Normand P."/>
            <person name="Dreyfus B."/>
            <person name="Pignol D."/>
            <person name="Stacey G."/>
            <person name="Emerich D."/>
            <person name="Vermeglio A."/>
            <person name="Medigue C."/>
            <person name="Sadowsky M."/>
        </authorList>
    </citation>
    <scope>NUCLEOTIDE SEQUENCE [LARGE SCALE GENOMIC DNA]</scope>
    <source>
        <strain>BTAi1 / ATCC BAA-1182</strain>
    </source>
</reference>
<dbReference type="EC" id="2.8.1.13" evidence="1"/>
<dbReference type="EMBL" id="CP000494">
    <property type="protein sequence ID" value="ABQ34082.1"/>
    <property type="molecule type" value="Genomic_DNA"/>
</dbReference>
<dbReference type="RefSeq" id="WP_012042112.1">
    <property type="nucleotide sequence ID" value="NC_009485.1"/>
</dbReference>
<dbReference type="SMR" id="A5ED38"/>
<dbReference type="STRING" id="288000.BBta_1881"/>
<dbReference type="KEGG" id="bbt:BBta_1881"/>
<dbReference type="eggNOG" id="COG0482">
    <property type="taxonomic scope" value="Bacteria"/>
</dbReference>
<dbReference type="HOGENOM" id="CLU_035188_0_1_5"/>
<dbReference type="OrthoDB" id="9800696at2"/>
<dbReference type="Proteomes" id="UP000000246">
    <property type="component" value="Chromosome"/>
</dbReference>
<dbReference type="GO" id="GO:0005737">
    <property type="term" value="C:cytoplasm"/>
    <property type="evidence" value="ECO:0007669"/>
    <property type="project" value="UniProtKB-SubCell"/>
</dbReference>
<dbReference type="GO" id="GO:0005524">
    <property type="term" value="F:ATP binding"/>
    <property type="evidence" value="ECO:0007669"/>
    <property type="project" value="UniProtKB-KW"/>
</dbReference>
<dbReference type="GO" id="GO:0000049">
    <property type="term" value="F:tRNA binding"/>
    <property type="evidence" value="ECO:0007669"/>
    <property type="project" value="UniProtKB-KW"/>
</dbReference>
<dbReference type="GO" id="GO:0103016">
    <property type="term" value="F:tRNA-uridine 2-sulfurtransferase activity"/>
    <property type="evidence" value="ECO:0007669"/>
    <property type="project" value="UniProtKB-EC"/>
</dbReference>
<dbReference type="GO" id="GO:0002143">
    <property type="term" value="P:tRNA wobble position uridine thiolation"/>
    <property type="evidence" value="ECO:0007669"/>
    <property type="project" value="TreeGrafter"/>
</dbReference>
<dbReference type="CDD" id="cd01998">
    <property type="entry name" value="MnmA_TRMU-like"/>
    <property type="match status" value="1"/>
</dbReference>
<dbReference type="FunFam" id="2.30.30.280:FF:000001">
    <property type="entry name" value="tRNA-specific 2-thiouridylase MnmA"/>
    <property type="match status" value="1"/>
</dbReference>
<dbReference type="FunFam" id="3.40.50.620:FF:000115">
    <property type="entry name" value="tRNA-specific 2-thiouridylase MnmA"/>
    <property type="match status" value="1"/>
</dbReference>
<dbReference type="Gene3D" id="2.30.30.280">
    <property type="entry name" value="Adenine nucleotide alpha hydrolases-like domains"/>
    <property type="match status" value="1"/>
</dbReference>
<dbReference type="Gene3D" id="3.40.50.620">
    <property type="entry name" value="HUPs"/>
    <property type="match status" value="1"/>
</dbReference>
<dbReference type="Gene3D" id="2.40.30.10">
    <property type="entry name" value="Translation factors"/>
    <property type="match status" value="1"/>
</dbReference>
<dbReference type="HAMAP" id="MF_00144">
    <property type="entry name" value="tRNA_thiouridyl_MnmA"/>
    <property type="match status" value="1"/>
</dbReference>
<dbReference type="InterPro" id="IPR004506">
    <property type="entry name" value="MnmA-like"/>
</dbReference>
<dbReference type="InterPro" id="IPR046885">
    <property type="entry name" value="MnmA-like_C"/>
</dbReference>
<dbReference type="InterPro" id="IPR046884">
    <property type="entry name" value="MnmA-like_central"/>
</dbReference>
<dbReference type="InterPro" id="IPR023382">
    <property type="entry name" value="MnmA-like_central_sf"/>
</dbReference>
<dbReference type="InterPro" id="IPR014729">
    <property type="entry name" value="Rossmann-like_a/b/a_fold"/>
</dbReference>
<dbReference type="NCBIfam" id="NF001138">
    <property type="entry name" value="PRK00143.1"/>
    <property type="match status" value="1"/>
</dbReference>
<dbReference type="NCBIfam" id="TIGR00420">
    <property type="entry name" value="trmU"/>
    <property type="match status" value="1"/>
</dbReference>
<dbReference type="PANTHER" id="PTHR11933:SF5">
    <property type="entry name" value="MITOCHONDRIAL TRNA-SPECIFIC 2-THIOURIDYLASE 1"/>
    <property type="match status" value="1"/>
</dbReference>
<dbReference type="PANTHER" id="PTHR11933">
    <property type="entry name" value="TRNA 5-METHYLAMINOMETHYL-2-THIOURIDYLATE -METHYLTRANSFERASE"/>
    <property type="match status" value="1"/>
</dbReference>
<dbReference type="Pfam" id="PF03054">
    <property type="entry name" value="tRNA_Me_trans"/>
    <property type="match status" value="1"/>
</dbReference>
<dbReference type="Pfam" id="PF20258">
    <property type="entry name" value="tRNA_Me_trans_C"/>
    <property type="match status" value="1"/>
</dbReference>
<dbReference type="Pfam" id="PF20259">
    <property type="entry name" value="tRNA_Me_trans_M"/>
    <property type="match status" value="1"/>
</dbReference>
<dbReference type="SUPFAM" id="SSF52402">
    <property type="entry name" value="Adenine nucleotide alpha hydrolases-like"/>
    <property type="match status" value="1"/>
</dbReference>
<protein>
    <recommendedName>
        <fullName evidence="1">tRNA-specific 2-thiouridylase MnmA</fullName>
        <ecNumber evidence="1">2.8.1.13</ecNumber>
    </recommendedName>
</protein>
<sequence length="397" mass="42990">MLNSLDLEGRPEDTRVVVAMSGGVDSSVTAALLKSEGYDVVGITLQLYDHGAATHRKGACCAGQDIHDARNVAERLGIPHYVLDYEDRFRESVIDNFAASYASGETPVPCIECNRAIKFGDLLKTARELGASVLATGHYVASRRLADGSRALVCAADADRDQSYFLFATTREQLDYLRFPLGDMTKPEVRELARRFGLEVADKHDSQDICFVPTGRYTDIIGKLRPNAMEPGEIVDLNGRVLGAHQGIANYTIGQRKGLGIAAGAPLYVVKLDVATRRVVVGPREALRTHRITLREVNWIGDGVLDAAVRDGLELFVRVRSTRPPQPAWLRGADGQYEVELVAGEEGVSPGQACVFYDAASGRARVLGGGFIQSAVAESRTTAGLVRPQRVAEPVRG</sequence>
<name>MNMA_BRASB</name>
<keyword id="KW-0067">ATP-binding</keyword>
<keyword id="KW-0963">Cytoplasm</keyword>
<keyword id="KW-1015">Disulfide bond</keyword>
<keyword id="KW-0547">Nucleotide-binding</keyword>
<keyword id="KW-1185">Reference proteome</keyword>
<keyword id="KW-0694">RNA-binding</keyword>
<keyword id="KW-0808">Transferase</keyword>
<keyword id="KW-0819">tRNA processing</keyword>
<keyword id="KW-0820">tRNA-binding</keyword>
<feature type="chain" id="PRO_0000349546" description="tRNA-specific 2-thiouridylase MnmA">
    <location>
        <begin position="1"/>
        <end position="397"/>
    </location>
</feature>
<feature type="region of interest" description="Interaction with tRNA" evidence="1">
    <location>
        <begin position="160"/>
        <end position="162"/>
    </location>
</feature>
<feature type="active site" description="Nucleophile" evidence="1">
    <location>
        <position position="113"/>
    </location>
</feature>
<feature type="active site" description="Cysteine persulfide intermediate" evidence="1">
    <location>
        <position position="210"/>
    </location>
</feature>
<feature type="binding site" evidence="1">
    <location>
        <begin position="19"/>
        <end position="26"/>
    </location>
    <ligand>
        <name>ATP</name>
        <dbReference type="ChEBI" id="CHEBI:30616"/>
    </ligand>
</feature>
<feature type="binding site" evidence="1">
    <location>
        <position position="45"/>
    </location>
    <ligand>
        <name>ATP</name>
        <dbReference type="ChEBI" id="CHEBI:30616"/>
    </ligand>
</feature>
<feature type="binding site" evidence="1">
    <location>
        <position position="137"/>
    </location>
    <ligand>
        <name>ATP</name>
        <dbReference type="ChEBI" id="CHEBI:30616"/>
    </ligand>
</feature>
<feature type="site" description="Interaction with tRNA" evidence="1">
    <location>
        <position position="138"/>
    </location>
</feature>
<feature type="site" description="Interaction with tRNA" evidence="1">
    <location>
        <position position="352"/>
    </location>
</feature>
<feature type="disulfide bond" description="Alternate" evidence="1">
    <location>
        <begin position="113"/>
        <end position="210"/>
    </location>
</feature>